<gene>
    <name type="primary">alr</name>
    <name type="ordered locus">A1G_00750</name>
</gene>
<accession>A8GQR1</accession>
<reference key="1">
    <citation type="submission" date="2007-09" db="EMBL/GenBank/DDBJ databases">
        <title>Complete genome sequence of Rickettsia rickettsii.</title>
        <authorList>
            <person name="Madan A."/>
            <person name="Fahey J."/>
            <person name="Helton E."/>
            <person name="Ketteman M."/>
            <person name="Madan A."/>
            <person name="Rodrigues S."/>
            <person name="Sanchez A."/>
            <person name="Dasch G."/>
            <person name="Eremeeva M."/>
        </authorList>
    </citation>
    <scope>NUCLEOTIDE SEQUENCE [LARGE SCALE GENOMIC DNA]</scope>
    <source>
        <strain>Sheila Smith</strain>
    </source>
</reference>
<name>ALR_RICRS</name>
<organism>
    <name type="scientific">Rickettsia rickettsii (strain Sheila Smith)</name>
    <dbReference type="NCBI Taxonomy" id="392021"/>
    <lineage>
        <taxon>Bacteria</taxon>
        <taxon>Pseudomonadati</taxon>
        <taxon>Pseudomonadota</taxon>
        <taxon>Alphaproteobacteria</taxon>
        <taxon>Rickettsiales</taxon>
        <taxon>Rickettsiaceae</taxon>
        <taxon>Rickettsieae</taxon>
        <taxon>Rickettsia</taxon>
        <taxon>spotted fever group</taxon>
    </lineage>
</organism>
<protein>
    <recommendedName>
        <fullName evidence="1">Alanine racemase</fullName>
        <ecNumber evidence="1">5.1.1.1</ecNumber>
    </recommendedName>
</protein>
<dbReference type="EC" id="5.1.1.1" evidence="1"/>
<dbReference type="EMBL" id="CP000848">
    <property type="protein sequence ID" value="ABV75736.1"/>
    <property type="molecule type" value="Genomic_DNA"/>
</dbReference>
<dbReference type="RefSeq" id="WP_012150351.1">
    <property type="nucleotide sequence ID" value="NZ_CP121767.1"/>
</dbReference>
<dbReference type="SMR" id="A8GQR1"/>
<dbReference type="GeneID" id="79936924"/>
<dbReference type="KEGG" id="rri:A1G_00750"/>
<dbReference type="HOGENOM" id="CLU_028393_1_1_5"/>
<dbReference type="UniPathway" id="UPA00042">
    <property type="reaction ID" value="UER00497"/>
</dbReference>
<dbReference type="Proteomes" id="UP000006832">
    <property type="component" value="Chromosome"/>
</dbReference>
<dbReference type="GO" id="GO:0005829">
    <property type="term" value="C:cytosol"/>
    <property type="evidence" value="ECO:0007669"/>
    <property type="project" value="TreeGrafter"/>
</dbReference>
<dbReference type="GO" id="GO:0008784">
    <property type="term" value="F:alanine racemase activity"/>
    <property type="evidence" value="ECO:0007669"/>
    <property type="project" value="UniProtKB-UniRule"/>
</dbReference>
<dbReference type="GO" id="GO:0030170">
    <property type="term" value="F:pyridoxal phosphate binding"/>
    <property type="evidence" value="ECO:0007669"/>
    <property type="project" value="UniProtKB-UniRule"/>
</dbReference>
<dbReference type="GO" id="GO:0030632">
    <property type="term" value="P:D-alanine biosynthetic process"/>
    <property type="evidence" value="ECO:0007669"/>
    <property type="project" value="UniProtKB-UniRule"/>
</dbReference>
<dbReference type="CDD" id="cd00430">
    <property type="entry name" value="PLPDE_III_AR"/>
    <property type="match status" value="1"/>
</dbReference>
<dbReference type="Gene3D" id="3.20.20.10">
    <property type="entry name" value="Alanine racemase"/>
    <property type="match status" value="1"/>
</dbReference>
<dbReference type="Gene3D" id="2.40.37.10">
    <property type="entry name" value="Lyase, Ornithine Decarboxylase, Chain A, domain 1"/>
    <property type="match status" value="1"/>
</dbReference>
<dbReference type="HAMAP" id="MF_01201">
    <property type="entry name" value="Ala_racemase"/>
    <property type="match status" value="1"/>
</dbReference>
<dbReference type="InterPro" id="IPR000821">
    <property type="entry name" value="Ala_racemase"/>
</dbReference>
<dbReference type="InterPro" id="IPR009006">
    <property type="entry name" value="Ala_racemase/Decarboxylase_C"/>
</dbReference>
<dbReference type="InterPro" id="IPR011079">
    <property type="entry name" value="Ala_racemase_C"/>
</dbReference>
<dbReference type="InterPro" id="IPR001608">
    <property type="entry name" value="Ala_racemase_N"/>
</dbReference>
<dbReference type="InterPro" id="IPR020622">
    <property type="entry name" value="Ala_racemase_pyridoxalP-BS"/>
</dbReference>
<dbReference type="InterPro" id="IPR029066">
    <property type="entry name" value="PLP-binding_barrel"/>
</dbReference>
<dbReference type="NCBIfam" id="TIGR00492">
    <property type="entry name" value="alr"/>
    <property type="match status" value="1"/>
</dbReference>
<dbReference type="NCBIfam" id="NF000792">
    <property type="entry name" value="PRK00053.2-3"/>
    <property type="match status" value="1"/>
</dbReference>
<dbReference type="PANTHER" id="PTHR30511">
    <property type="entry name" value="ALANINE RACEMASE"/>
    <property type="match status" value="1"/>
</dbReference>
<dbReference type="PANTHER" id="PTHR30511:SF0">
    <property type="entry name" value="ALANINE RACEMASE, CATABOLIC-RELATED"/>
    <property type="match status" value="1"/>
</dbReference>
<dbReference type="Pfam" id="PF00842">
    <property type="entry name" value="Ala_racemase_C"/>
    <property type="match status" value="1"/>
</dbReference>
<dbReference type="Pfam" id="PF01168">
    <property type="entry name" value="Ala_racemase_N"/>
    <property type="match status" value="1"/>
</dbReference>
<dbReference type="PRINTS" id="PR00992">
    <property type="entry name" value="ALARACEMASE"/>
</dbReference>
<dbReference type="SMART" id="SM01005">
    <property type="entry name" value="Ala_racemase_C"/>
    <property type="match status" value="1"/>
</dbReference>
<dbReference type="SUPFAM" id="SSF50621">
    <property type="entry name" value="Alanine racemase C-terminal domain-like"/>
    <property type="match status" value="1"/>
</dbReference>
<dbReference type="SUPFAM" id="SSF51419">
    <property type="entry name" value="PLP-binding barrel"/>
    <property type="match status" value="1"/>
</dbReference>
<dbReference type="PROSITE" id="PS00395">
    <property type="entry name" value="ALANINE_RACEMASE"/>
    <property type="match status" value="1"/>
</dbReference>
<feature type="chain" id="PRO_1000066036" description="Alanine racemase">
    <location>
        <begin position="1"/>
        <end position="355"/>
    </location>
</feature>
<feature type="active site" description="Proton acceptor; specific for D-alanine" evidence="1">
    <location>
        <position position="34"/>
    </location>
</feature>
<feature type="active site" description="Proton acceptor; specific for L-alanine" evidence="1">
    <location>
        <position position="249"/>
    </location>
</feature>
<feature type="binding site" evidence="1">
    <location>
        <position position="133"/>
    </location>
    <ligand>
        <name>substrate</name>
    </ligand>
</feature>
<feature type="binding site" evidence="1">
    <location>
        <position position="297"/>
    </location>
    <ligand>
        <name>substrate</name>
    </ligand>
</feature>
<feature type="modified residue" description="N6-(pyridoxal phosphate)lysine" evidence="1">
    <location>
        <position position="34"/>
    </location>
</feature>
<evidence type="ECO:0000255" key="1">
    <source>
        <dbReference type="HAMAP-Rule" id="MF_01201"/>
    </source>
</evidence>
<proteinExistence type="inferred from homology"/>
<sequence length="355" mass="39501">MSLCTVEINLSTIKNNYLLLQDVCKTSLVGAAVKANGYGLGAIQISKALIEENCRHFFVASSEEGVNLRNALGLDINILVLNGVFEHDALELIEYNLTPVLNNLKQIEIWQKFSNLKNRLLPCYLHFNTGINRLGLSSDEIEQLINDRDLLKGLDLQYIISHLAISEEIDNPYNLEQLNRFKAYLQYFPNVKASLANSGGIFLGQDYHFDLARPGAALYGLNPLTKNPVTLKAPIIHLQNLTLDSHIGYNMTFTTKRDSVIATLPLGYADGFSRNFSNQGEVFINSRSVPIVGRVSMDLINIDVTDLPPSEIFLGQEAEIIGNYCTPNKIASIIGTIGYEVLTNLGSRYKRKYIG</sequence>
<keyword id="KW-0413">Isomerase</keyword>
<keyword id="KW-0663">Pyridoxal phosphate</keyword>
<comment type="function">
    <text evidence="1">Catalyzes the interconversion of L-alanine and D-alanine. May also act on other amino acids.</text>
</comment>
<comment type="catalytic activity">
    <reaction evidence="1">
        <text>L-alanine = D-alanine</text>
        <dbReference type="Rhea" id="RHEA:20249"/>
        <dbReference type="ChEBI" id="CHEBI:57416"/>
        <dbReference type="ChEBI" id="CHEBI:57972"/>
        <dbReference type="EC" id="5.1.1.1"/>
    </reaction>
</comment>
<comment type="cofactor">
    <cofactor evidence="1">
        <name>pyridoxal 5'-phosphate</name>
        <dbReference type="ChEBI" id="CHEBI:597326"/>
    </cofactor>
</comment>
<comment type="pathway">
    <text evidence="1">Amino-acid biosynthesis; D-alanine biosynthesis; D-alanine from L-alanine: step 1/1.</text>
</comment>
<comment type="similarity">
    <text evidence="1">Belongs to the alanine racemase family.</text>
</comment>